<protein>
    <recommendedName>
        <fullName evidence="1">Outer-membrane lipoprotein carrier protein</fullName>
    </recommendedName>
</protein>
<proteinExistence type="inferred from homology"/>
<organism>
    <name type="scientific">Legionella pneumophila (strain Corby)</name>
    <dbReference type="NCBI Taxonomy" id="400673"/>
    <lineage>
        <taxon>Bacteria</taxon>
        <taxon>Pseudomonadati</taxon>
        <taxon>Pseudomonadota</taxon>
        <taxon>Gammaproteobacteria</taxon>
        <taxon>Legionellales</taxon>
        <taxon>Legionellaceae</taxon>
        <taxon>Legionella</taxon>
    </lineage>
</organism>
<sequence length="202" mass="22851">MNKLFLILLLIFSHEVFSQTSAEVLQSKLNAIQTMTANFSQIVKAKNREVSRSSGSMALQRPGRFRWQTKDPLEQLIVADGQKMWIYDVDLEQVTVKNQEKGLGGTAALFLSGYDETLTHDFDVSEKQKGKLTVFDLKSKSAKENFQRIKLIFSQSTLIGLELYDQLGQITDVKLVQIKSNPKLPAKLFQFKPPKGVDVVKQ</sequence>
<feature type="signal peptide" evidence="1">
    <location>
        <begin position="1"/>
        <end position="18"/>
    </location>
</feature>
<feature type="chain" id="PRO_1000071831" description="Outer-membrane lipoprotein carrier protein">
    <location>
        <begin position="19"/>
        <end position="202"/>
    </location>
</feature>
<name>LOLA_LEGPC</name>
<accession>A5ICS0</accession>
<comment type="function">
    <text evidence="1">Participates in the translocation of lipoproteins from the inner membrane to the outer membrane. Only forms a complex with a lipoprotein if the residue after the N-terminal Cys is not an aspartate (The Asp acts as a targeting signal to indicate that the lipoprotein should stay in the inner membrane).</text>
</comment>
<comment type="subunit">
    <text evidence="1">Monomer.</text>
</comment>
<comment type="subcellular location">
    <subcellularLocation>
        <location evidence="1">Periplasm</location>
    </subcellularLocation>
</comment>
<comment type="similarity">
    <text evidence="1">Belongs to the LolA family.</text>
</comment>
<gene>
    <name evidence="1" type="primary">lolA</name>
    <name type="ordered locus">LPC_1206</name>
</gene>
<dbReference type="EMBL" id="CP000675">
    <property type="protein sequence ID" value="ABQ55170.1"/>
    <property type="molecule type" value="Genomic_DNA"/>
</dbReference>
<dbReference type="RefSeq" id="WP_011946715.1">
    <property type="nucleotide sequence ID" value="NZ_JAPMSS010000005.1"/>
</dbReference>
<dbReference type="SMR" id="A5ICS0"/>
<dbReference type="GeneID" id="57035754"/>
<dbReference type="KEGG" id="lpc:LPC_1206"/>
<dbReference type="HOGENOM" id="CLU_087560_0_0_6"/>
<dbReference type="GO" id="GO:0030288">
    <property type="term" value="C:outer membrane-bounded periplasmic space"/>
    <property type="evidence" value="ECO:0007669"/>
    <property type="project" value="TreeGrafter"/>
</dbReference>
<dbReference type="GO" id="GO:0044874">
    <property type="term" value="P:lipoprotein localization to outer membrane"/>
    <property type="evidence" value="ECO:0007669"/>
    <property type="project" value="UniProtKB-UniRule"/>
</dbReference>
<dbReference type="GO" id="GO:0042953">
    <property type="term" value="P:lipoprotein transport"/>
    <property type="evidence" value="ECO:0007669"/>
    <property type="project" value="InterPro"/>
</dbReference>
<dbReference type="CDD" id="cd16325">
    <property type="entry name" value="LolA"/>
    <property type="match status" value="1"/>
</dbReference>
<dbReference type="Gene3D" id="2.50.20.10">
    <property type="entry name" value="Lipoprotein localisation LolA/LolB/LppX"/>
    <property type="match status" value="1"/>
</dbReference>
<dbReference type="HAMAP" id="MF_00240">
    <property type="entry name" value="LolA"/>
    <property type="match status" value="1"/>
</dbReference>
<dbReference type="InterPro" id="IPR029046">
    <property type="entry name" value="LolA/LolB/LppX"/>
</dbReference>
<dbReference type="InterPro" id="IPR004564">
    <property type="entry name" value="OM_lipoprot_carrier_LolA-like"/>
</dbReference>
<dbReference type="InterPro" id="IPR018323">
    <property type="entry name" value="OM_lipoprot_carrier_LolA_Pbac"/>
</dbReference>
<dbReference type="NCBIfam" id="TIGR00547">
    <property type="entry name" value="lolA"/>
    <property type="match status" value="1"/>
</dbReference>
<dbReference type="PANTHER" id="PTHR35869">
    <property type="entry name" value="OUTER-MEMBRANE LIPOPROTEIN CARRIER PROTEIN"/>
    <property type="match status" value="1"/>
</dbReference>
<dbReference type="PANTHER" id="PTHR35869:SF1">
    <property type="entry name" value="OUTER-MEMBRANE LIPOPROTEIN CARRIER PROTEIN"/>
    <property type="match status" value="1"/>
</dbReference>
<dbReference type="Pfam" id="PF03548">
    <property type="entry name" value="LolA"/>
    <property type="match status" value="1"/>
</dbReference>
<dbReference type="SUPFAM" id="SSF89392">
    <property type="entry name" value="Prokaryotic lipoproteins and lipoprotein localization factors"/>
    <property type="match status" value="1"/>
</dbReference>
<reference key="1">
    <citation type="submission" date="2006-11" db="EMBL/GenBank/DDBJ databases">
        <title>Identification and characterization of a new conjugation/ type IVA secretion system (trb/tra) of L. pneumophila Corby localized on a mobile genomic island.</title>
        <authorList>
            <person name="Gloeckner G."/>
            <person name="Albert-Weissenberger C."/>
            <person name="Weinmann E."/>
            <person name="Jacobi S."/>
            <person name="Schunder E."/>
            <person name="Steinert M."/>
            <person name="Buchrieser C."/>
            <person name="Hacker J."/>
            <person name="Heuner K."/>
        </authorList>
    </citation>
    <scope>NUCLEOTIDE SEQUENCE [LARGE SCALE GENOMIC DNA]</scope>
    <source>
        <strain>Corby</strain>
    </source>
</reference>
<keyword id="KW-0143">Chaperone</keyword>
<keyword id="KW-0574">Periplasm</keyword>
<keyword id="KW-0653">Protein transport</keyword>
<keyword id="KW-0732">Signal</keyword>
<keyword id="KW-0813">Transport</keyword>
<evidence type="ECO:0000255" key="1">
    <source>
        <dbReference type="HAMAP-Rule" id="MF_00240"/>
    </source>
</evidence>